<keyword id="KW-1185">Reference proteome</keyword>
<proteinExistence type="inferred from homology"/>
<name>Y484_MYCPN</name>
<reference key="1">
    <citation type="journal article" date="1996" name="Nucleic Acids Res.">
        <title>Complete sequence analysis of the genome of the bacterium Mycoplasma pneumoniae.</title>
        <authorList>
            <person name="Himmelreich R."/>
            <person name="Hilbert H."/>
            <person name="Plagens H."/>
            <person name="Pirkl E."/>
            <person name="Li B.-C."/>
            <person name="Herrmann R."/>
        </authorList>
    </citation>
    <scope>NUCLEOTIDE SEQUENCE [LARGE SCALE GENOMIC DNA]</scope>
    <source>
        <strain>ATCC 29342 / M129 / Subtype 1</strain>
    </source>
</reference>
<dbReference type="EMBL" id="U00089">
    <property type="protein sequence ID" value="AAB96006.1"/>
    <property type="molecule type" value="Genomic_DNA"/>
</dbReference>
<dbReference type="PIR" id="S73684">
    <property type="entry name" value="S73684"/>
</dbReference>
<dbReference type="RefSeq" id="NP_110172.1">
    <property type="nucleotide sequence ID" value="NC_000912.1"/>
</dbReference>
<dbReference type="SMR" id="P75301"/>
<dbReference type="STRING" id="272634.MPN_484"/>
<dbReference type="EnsemblBacteria" id="AAB96006">
    <property type="protein sequence ID" value="AAB96006"/>
    <property type="gene ID" value="MPN_484"/>
</dbReference>
<dbReference type="KEGG" id="mpn:MPN_484"/>
<dbReference type="PATRIC" id="fig|272634.6.peg.524"/>
<dbReference type="HOGENOM" id="CLU_089620_0_0_14"/>
<dbReference type="BioCyc" id="MPNE272634:G1GJ3-792-MONOMER"/>
<dbReference type="Proteomes" id="UP000000808">
    <property type="component" value="Chromosome"/>
</dbReference>
<dbReference type="Gene3D" id="6.10.250.40">
    <property type="match status" value="1"/>
</dbReference>
<dbReference type="InterPro" id="IPR002862">
    <property type="entry name" value="DUF16"/>
</dbReference>
<dbReference type="Pfam" id="PF01519">
    <property type="entry name" value="DUF16"/>
    <property type="match status" value="1"/>
</dbReference>
<dbReference type="SUPFAM" id="SSF144266">
    <property type="entry name" value="MPN010-like"/>
    <property type="match status" value="1"/>
</dbReference>
<organism>
    <name type="scientific">Mycoplasma pneumoniae (strain ATCC 29342 / M129 / Subtype 1)</name>
    <name type="common">Mycoplasmoides pneumoniae</name>
    <dbReference type="NCBI Taxonomy" id="272634"/>
    <lineage>
        <taxon>Bacteria</taxon>
        <taxon>Bacillati</taxon>
        <taxon>Mycoplasmatota</taxon>
        <taxon>Mycoplasmoidales</taxon>
        <taxon>Mycoplasmoidaceae</taxon>
        <taxon>Mycoplasmoides</taxon>
    </lineage>
</organism>
<sequence length="103" mass="11936">MGFYGNLNHMEKRKSGYVTQKQFNDFKNSNNQRLIKIENTLVSQGEQISQLIKVSILQGEQINKLTETVEKQGEQIQTQGETLKLILETLQVINKRLDRLESK</sequence>
<accession>P75301</accession>
<protein>
    <recommendedName>
        <fullName>UPF0134 protein MPN_484</fullName>
    </recommendedName>
</protein>
<comment type="similarity">
    <text evidence="1">Belongs to the UPF0134 family.</text>
</comment>
<feature type="chain" id="PRO_0000221609" description="UPF0134 protein MPN_484">
    <location>
        <begin position="1"/>
        <end position="103"/>
    </location>
</feature>
<gene>
    <name type="ordered locus">MPN_484</name>
    <name type="ORF">MP358</name>
    <name type="ORF">P02_orf103b</name>
</gene>
<evidence type="ECO:0000305" key="1"/>